<gene>
    <name type="primary">SCJ1</name>
    <name type="ordered locus">YMR214W</name>
    <name type="ORF">YM8261.08</name>
</gene>
<evidence type="ECO:0000255" key="1"/>
<evidence type="ECO:0000255" key="2">
    <source>
        <dbReference type="PROSITE-ProRule" id="PRU00286"/>
    </source>
</evidence>
<evidence type="ECO:0000255" key="3">
    <source>
        <dbReference type="PROSITE-ProRule" id="PRU00546"/>
    </source>
</evidence>
<evidence type="ECO:0000255" key="4">
    <source>
        <dbReference type="PROSITE-ProRule" id="PRU10138"/>
    </source>
</evidence>
<evidence type="ECO:0000269" key="5">
    <source>
    </source>
</evidence>
<evidence type="ECO:0000269" key="6">
    <source>
    </source>
</evidence>
<evidence type="ECO:0000269" key="7">
    <source>
    </source>
</evidence>
<evidence type="ECO:0000269" key="8">
    <source>
    </source>
</evidence>
<evidence type="ECO:0000305" key="9"/>
<feature type="signal peptide" evidence="1">
    <location>
        <begin position="1"/>
        <end position="21"/>
    </location>
</feature>
<feature type="chain" id="PRO_0000071091" description="DnaJ-related protein SCJ1">
    <location>
        <begin position="22"/>
        <end position="377"/>
    </location>
</feature>
<feature type="domain" description="J" evidence="2">
    <location>
        <begin position="23"/>
        <end position="88"/>
    </location>
</feature>
<feature type="repeat" description="CXXCXGXG motif">
    <location>
        <begin position="169"/>
        <end position="176"/>
    </location>
</feature>
<feature type="repeat" description="CXXCXGXG motif">
    <location>
        <begin position="185"/>
        <end position="192"/>
    </location>
</feature>
<feature type="repeat" description="CXXCXGXG motif">
    <location>
        <begin position="211"/>
        <end position="218"/>
    </location>
</feature>
<feature type="repeat" description="CXXCXGXG motif">
    <location>
        <begin position="225"/>
        <end position="232"/>
    </location>
</feature>
<feature type="zinc finger region" description="CR-type" evidence="3">
    <location>
        <begin position="156"/>
        <end position="237"/>
    </location>
</feature>
<feature type="short sequence motif" description="Cell attachment site" evidence="1">
    <location>
        <begin position="288"/>
        <end position="290"/>
    </location>
</feature>
<feature type="short sequence motif" description="Prevents secretion from ER" evidence="4">
    <location>
        <begin position="374"/>
        <end position="377"/>
    </location>
</feature>
<protein>
    <recommendedName>
        <fullName>DnaJ-related protein SCJ1</fullName>
        <shortName>J protein SCJ1</shortName>
    </recommendedName>
</protein>
<accession>P25303</accession>
<accession>D6W039</accession>
<dbReference type="EMBL" id="X58679">
    <property type="protein sequence ID" value="CAA41529.1"/>
    <property type="status" value="ALT_INIT"/>
    <property type="molecule type" value="Genomic_DNA"/>
</dbReference>
<dbReference type="EMBL" id="Z49809">
    <property type="protein sequence ID" value="CAA89929.1"/>
    <property type="status" value="ALT_INIT"/>
    <property type="molecule type" value="Genomic_DNA"/>
</dbReference>
<dbReference type="EMBL" id="BK006946">
    <property type="protein sequence ID" value="DAA10113.1"/>
    <property type="molecule type" value="Genomic_DNA"/>
</dbReference>
<dbReference type="PIR" id="S13648">
    <property type="entry name" value="S13648"/>
</dbReference>
<dbReference type="RefSeq" id="NP_013941.2">
    <property type="nucleotide sequence ID" value="NM_001182721.1"/>
</dbReference>
<dbReference type="SMR" id="P25303"/>
<dbReference type="BioGRID" id="35392">
    <property type="interactions" value="183"/>
</dbReference>
<dbReference type="DIP" id="DIP-2395N"/>
<dbReference type="FunCoup" id="P25303">
    <property type="interactions" value="607"/>
</dbReference>
<dbReference type="IntAct" id="P25303">
    <property type="interactions" value="42"/>
</dbReference>
<dbReference type="MINT" id="P25303"/>
<dbReference type="STRING" id="4932.YMR214W"/>
<dbReference type="PaxDb" id="4932-YMR214W"/>
<dbReference type="PeptideAtlas" id="P25303"/>
<dbReference type="EnsemblFungi" id="YMR214W_mRNA">
    <property type="protein sequence ID" value="YMR214W"/>
    <property type="gene ID" value="YMR214W"/>
</dbReference>
<dbReference type="GeneID" id="855254"/>
<dbReference type="KEGG" id="sce:YMR214W"/>
<dbReference type="AGR" id="SGD:S000004827"/>
<dbReference type="SGD" id="S000004827">
    <property type="gene designation" value="SCJ1"/>
</dbReference>
<dbReference type="VEuPathDB" id="FungiDB:YMR214W"/>
<dbReference type="eggNOG" id="KOG0712">
    <property type="taxonomic scope" value="Eukaryota"/>
</dbReference>
<dbReference type="HOGENOM" id="CLU_017633_0_2_1"/>
<dbReference type="InParanoid" id="P25303"/>
<dbReference type="OMA" id="KWHEDGD"/>
<dbReference type="OrthoDB" id="550424at2759"/>
<dbReference type="BioCyc" id="YEAST:G3O-32897-MONOMER"/>
<dbReference type="BioGRID-ORCS" id="855254">
    <property type="hits" value="0 hits in 10 CRISPR screens"/>
</dbReference>
<dbReference type="PRO" id="PR:P25303"/>
<dbReference type="Proteomes" id="UP000002311">
    <property type="component" value="Chromosome XIII"/>
</dbReference>
<dbReference type="RNAct" id="P25303">
    <property type="molecule type" value="protein"/>
</dbReference>
<dbReference type="GO" id="GO:0005737">
    <property type="term" value="C:cytoplasm"/>
    <property type="evidence" value="ECO:0000318"/>
    <property type="project" value="GO_Central"/>
</dbReference>
<dbReference type="GO" id="GO:0005783">
    <property type="term" value="C:endoplasmic reticulum"/>
    <property type="evidence" value="ECO:0007005"/>
    <property type="project" value="SGD"/>
</dbReference>
<dbReference type="GO" id="GO:0005788">
    <property type="term" value="C:endoplasmic reticulum lumen"/>
    <property type="evidence" value="ECO:0000314"/>
    <property type="project" value="SGD"/>
</dbReference>
<dbReference type="GO" id="GO:0030544">
    <property type="term" value="F:Hsp70 protein binding"/>
    <property type="evidence" value="ECO:0007669"/>
    <property type="project" value="InterPro"/>
</dbReference>
<dbReference type="GO" id="GO:0051087">
    <property type="term" value="F:protein-folding chaperone binding"/>
    <property type="evidence" value="ECO:0000315"/>
    <property type="project" value="SGD"/>
</dbReference>
<dbReference type="GO" id="GO:0051082">
    <property type="term" value="F:unfolded protein binding"/>
    <property type="evidence" value="ECO:0007669"/>
    <property type="project" value="InterPro"/>
</dbReference>
<dbReference type="GO" id="GO:0008270">
    <property type="term" value="F:zinc ion binding"/>
    <property type="evidence" value="ECO:0007669"/>
    <property type="project" value="UniProtKB-KW"/>
</dbReference>
<dbReference type="GO" id="GO:0036503">
    <property type="term" value="P:ERAD pathway"/>
    <property type="evidence" value="ECO:0000315"/>
    <property type="project" value="SGD"/>
</dbReference>
<dbReference type="GO" id="GO:0034975">
    <property type="term" value="P:protein folding in endoplasmic reticulum"/>
    <property type="evidence" value="ECO:0000315"/>
    <property type="project" value="SGD"/>
</dbReference>
<dbReference type="GO" id="GO:0042026">
    <property type="term" value="P:protein refolding"/>
    <property type="evidence" value="ECO:0000318"/>
    <property type="project" value="GO_Central"/>
</dbReference>
<dbReference type="GO" id="GO:0015031">
    <property type="term" value="P:protein transport"/>
    <property type="evidence" value="ECO:0007669"/>
    <property type="project" value="UniProtKB-KW"/>
</dbReference>
<dbReference type="GO" id="GO:0006986">
    <property type="term" value="P:response to unfolded protein"/>
    <property type="evidence" value="ECO:0000315"/>
    <property type="project" value="SGD"/>
</dbReference>
<dbReference type="CDD" id="cd06257">
    <property type="entry name" value="DnaJ"/>
    <property type="match status" value="1"/>
</dbReference>
<dbReference type="CDD" id="cd10747">
    <property type="entry name" value="DnaJ_C"/>
    <property type="match status" value="1"/>
</dbReference>
<dbReference type="CDD" id="cd10719">
    <property type="entry name" value="DnaJ_zf"/>
    <property type="match status" value="1"/>
</dbReference>
<dbReference type="FunFam" id="2.10.230.10:FF:000002">
    <property type="entry name" value="Molecular chaperone DnaJ"/>
    <property type="match status" value="1"/>
</dbReference>
<dbReference type="FunFam" id="1.10.287.110:FF:000124">
    <property type="entry name" value="SCJ1p protein"/>
    <property type="match status" value="1"/>
</dbReference>
<dbReference type="Gene3D" id="1.10.287.110">
    <property type="entry name" value="DnaJ domain"/>
    <property type="match status" value="1"/>
</dbReference>
<dbReference type="Gene3D" id="2.10.230.10">
    <property type="entry name" value="Heat shock protein DnaJ, cysteine-rich domain"/>
    <property type="match status" value="1"/>
</dbReference>
<dbReference type="Gene3D" id="2.60.260.20">
    <property type="entry name" value="Urease metallochaperone UreE, N-terminal domain"/>
    <property type="match status" value="2"/>
</dbReference>
<dbReference type="InterPro" id="IPR002939">
    <property type="entry name" value="DnaJ_C"/>
</dbReference>
<dbReference type="InterPro" id="IPR001623">
    <property type="entry name" value="DnaJ_domain"/>
</dbReference>
<dbReference type="InterPro" id="IPR018253">
    <property type="entry name" value="DnaJ_domain_CS"/>
</dbReference>
<dbReference type="InterPro" id="IPR044713">
    <property type="entry name" value="DNJA1/2-like"/>
</dbReference>
<dbReference type="InterPro" id="IPR008971">
    <property type="entry name" value="HSP40/DnaJ_pept-bd"/>
</dbReference>
<dbReference type="InterPro" id="IPR001305">
    <property type="entry name" value="HSP_DnaJ_Cys-rich_dom"/>
</dbReference>
<dbReference type="InterPro" id="IPR036410">
    <property type="entry name" value="HSP_DnaJ_Cys-rich_dom_sf"/>
</dbReference>
<dbReference type="InterPro" id="IPR036869">
    <property type="entry name" value="J_dom_sf"/>
</dbReference>
<dbReference type="PANTHER" id="PTHR43888">
    <property type="entry name" value="DNAJ-LIKE-2, ISOFORM A-RELATED"/>
    <property type="match status" value="1"/>
</dbReference>
<dbReference type="Pfam" id="PF00226">
    <property type="entry name" value="DnaJ"/>
    <property type="match status" value="1"/>
</dbReference>
<dbReference type="Pfam" id="PF01556">
    <property type="entry name" value="DnaJ_C"/>
    <property type="match status" value="1"/>
</dbReference>
<dbReference type="Pfam" id="PF00684">
    <property type="entry name" value="DnaJ_CXXCXGXG"/>
    <property type="match status" value="1"/>
</dbReference>
<dbReference type="PRINTS" id="PR00625">
    <property type="entry name" value="JDOMAIN"/>
</dbReference>
<dbReference type="SMART" id="SM00271">
    <property type="entry name" value="DnaJ"/>
    <property type="match status" value="1"/>
</dbReference>
<dbReference type="SUPFAM" id="SSF46565">
    <property type="entry name" value="Chaperone J-domain"/>
    <property type="match status" value="1"/>
</dbReference>
<dbReference type="SUPFAM" id="SSF57938">
    <property type="entry name" value="DnaJ/Hsp40 cysteine-rich domain"/>
    <property type="match status" value="1"/>
</dbReference>
<dbReference type="SUPFAM" id="SSF49493">
    <property type="entry name" value="HSP40/DnaJ peptide-binding domain"/>
    <property type="match status" value="2"/>
</dbReference>
<dbReference type="PROSITE" id="PS00636">
    <property type="entry name" value="DNAJ_1"/>
    <property type="match status" value="1"/>
</dbReference>
<dbReference type="PROSITE" id="PS50076">
    <property type="entry name" value="DNAJ_2"/>
    <property type="match status" value="1"/>
</dbReference>
<dbReference type="PROSITE" id="PS00014">
    <property type="entry name" value="ER_TARGET"/>
    <property type="match status" value="1"/>
</dbReference>
<dbReference type="PROSITE" id="PS51188">
    <property type="entry name" value="ZF_CR"/>
    <property type="match status" value="1"/>
</dbReference>
<sequence>MIPKLYIHLILSLLLLPLILAQDYYAILEIDKDATEKEIKSAYRQLSKKYHPDKNAGSEEAHQKFIEVGEAYDVLSDPEKKKIYDQFGADAVKNGGGGGGPGGPGAGGFHDPFDIFERMFQGGHGGPGGGFGQRQRQRGPMIKVQEKLSLKQFYSGSSIEFTLNLNDECDACHGSGSADGKLAQCPDCQGRGVIIQVLRMGIMTQQIQQMCGRCGGTGQIIKNECKTCHGKKVTKKNKFFHVDVPPGAPRNYMDTRVGEAEKGPDFDAGDLVIEFKEKDTENMGYRRRGDNLYRTEVLSAAEALYGGWQRTIEFLDENKPVKLSRPAHVVVSNGEVEVVKGFGMPKGSKGYGDLYIDYVVVMPKTFKSGQNMLKDEL</sequence>
<comment type="function">
    <text evidence="5 8">Regulates protein folding in the endoplasmic reticulum lumen. Probably acts as a J-protein for the Hsp70-type chaperone KAR2 by stimulating its ATP-dependent reaction cycle and initiating folding reactions. Also involved in the endoplasmic reticulum-associated degradation (ERAD) process. Cooperates with KAR2 and another J-protein JEM1 to facilitate the export of ERAD substrates to the cytoplasm by maintaining them in a translocation-competent state and preventing their aggregation in the endoplasmic reticulum lumen.</text>
</comment>
<comment type="subcellular location">
    <subcellularLocation>
        <location evidence="4 7">Endoplasmic reticulum lumen</location>
    </subcellularLocation>
</comment>
<comment type="miscellaneous">
    <text evidence="6">Present with 8260 molecules/cell in log phase SD medium.</text>
</comment>
<comment type="sequence caution" evidence="9">
    <conflict type="erroneous initiation">
        <sequence resource="EMBL-CDS" id="CAA41529"/>
    </conflict>
</comment>
<comment type="sequence caution" evidence="9">
    <conflict type="erroneous initiation">
        <sequence resource="EMBL-CDS" id="CAA89929"/>
    </conflict>
</comment>
<organism>
    <name type="scientific">Saccharomyces cerevisiae (strain ATCC 204508 / S288c)</name>
    <name type="common">Baker's yeast</name>
    <dbReference type="NCBI Taxonomy" id="559292"/>
    <lineage>
        <taxon>Eukaryota</taxon>
        <taxon>Fungi</taxon>
        <taxon>Dikarya</taxon>
        <taxon>Ascomycota</taxon>
        <taxon>Saccharomycotina</taxon>
        <taxon>Saccharomycetes</taxon>
        <taxon>Saccharomycetales</taxon>
        <taxon>Saccharomycetaceae</taxon>
        <taxon>Saccharomyces</taxon>
    </lineage>
</organism>
<reference key="1">
    <citation type="journal article" date="1991" name="Nature">
        <title>A homologue of the bacterial heat-shock gene DnaJ that alters protein sorting in yeast.</title>
        <authorList>
            <person name="Blumberg H."/>
            <person name="Silver P.A."/>
        </authorList>
    </citation>
    <scope>NUCLEOTIDE SEQUENCE [GENOMIC DNA]</scope>
</reference>
<reference key="2">
    <citation type="journal article" date="1997" name="Nature">
        <title>The nucleotide sequence of Saccharomyces cerevisiae chromosome XIII.</title>
        <authorList>
            <person name="Bowman S."/>
            <person name="Churcher C.M."/>
            <person name="Badcock K."/>
            <person name="Brown D."/>
            <person name="Chillingworth T."/>
            <person name="Connor R."/>
            <person name="Dedman K."/>
            <person name="Devlin K."/>
            <person name="Gentles S."/>
            <person name="Hamlin N."/>
            <person name="Hunt S."/>
            <person name="Jagels K."/>
            <person name="Lye G."/>
            <person name="Moule S."/>
            <person name="Odell C."/>
            <person name="Pearson D."/>
            <person name="Rajandream M.A."/>
            <person name="Rice P."/>
            <person name="Skelton J."/>
            <person name="Walsh S.V."/>
            <person name="Whitehead S."/>
            <person name="Barrell B.G."/>
        </authorList>
    </citation>
    <scope>NUCLEOTIDE SEQUENCE [LARGE SCALE GENOMIC DNA]</scope>
    <source>
        <strain>ATCC 204508 / S288c</strain>
    </source>
</reference>
<reference key="3">
    <citation type="journal article" date="2014" name="G3 (Bethesda)">
        <title>The reference genome sequence of Saccharomyces cerevisiae: Then and now.</title>
        <authorList>
            <person name="Engel S.R."/>
            <person name="Dietrich F.S."/>
            <person name="Fisk D.G."/>
            <person name="Binkley G."/>
            <person name="Balakrishnan R."/>
            <person name="Costanzo M.C."/>
            <person name="Dwight S.S."/>
            <person name="Hitz B.C."/>
            <person name="Karra K."/>
            <person name="Nash R.S."/>
            <person name="Weng S."/>
            <person name="Wong E.D."/>
            <person name="Lloyd P."/>
            <person name="Skrzypek M.S."/>
            <person name="Miyasato S.R."/>
            <person name="Simison M."/>
            <person name="Cherry J.M."/>
        </authorList>
    </citation>
    <scope>GENOME REANNOTATION</scope>
    <source>
        <strain>ATCC 204508 / S288c</strain>
    </source>
</reference>
<reference key="4">
    <citation type="journal article" date="1995" name="J. Cell Biol.">
        <title>A yeast DnaJ homologue, Scj1p, can function in the endoplasmic reticulum with BiP/Kar2p via a conserved domain that specifies interactions with Hsp70s.</title>
        <authorList>
            <person name="Schlenstedt G."/>
            <person name="Harris S."/>
            <person name="Risse B."/>
            <person name="Lill R."/>
            <person name="Silver P.A."/>
        </authorList>
    </citation>
    <scope>SUBCELLULAR LOCATION</scope>
    <scope>IDENTIFICATION OF PROBABLE INITIATION SITE</scope>
</reference>
<reference key="5">
    <citation type="journal article" date="1998" name="J. Cell Biol.">
        <title>A role for the DnaJ homologue Scj1p in protein folding in the yeast endoplasmic reticulum.</title>
        <authorList>
            <person name="Silberstein S."/>
            <person name="Schlenstedt G."/>
            <person name="Silver P.A."/>
            <person name="Gilmore R."/>
        </authorList>
    </citation>
    <scope>FUNCTION</scope>
</reference>
<reference key="6">
    <citation type="journal article" date="2001" name="J. Cell Biol.">
        <title>Molecular chaperones in the yeast endoplasmic reticulum maintain the solubility of proteins for retrotranslocation and degradation.</title>
        <authorList>
            <person name="Nishikawa S.I."/>
            <person name="Fewell S.W."/>
            <person name="Kato Y."/>
            <person name="Brodsky J.L."/>
            <person name="Endo T."/>
        </authorList>
    </citation>
    <scope>FUNCTION</scope>
</reference>
<reference key="7">
    <citation type="journal article" date="2003" name="Nature">
        <title>Sequencing and comparison of yeast species to identify genes and regulatory elements.</title>
        <authorList>
            <person name="Kellis M."/>
            <person name="Patterson N."/>
            <person name="Endrizzi M."/>
            <person name="Birren B.W."/>
            <person name="Lander E.S."/>
        </authorList>
    </citation>
    <scope>IDENTIFICATION OF PROBABLE INITIATION SITE</scope>
</reference>
<reference key="8">
    <citation type="journal article" date="2003" name="Nature">
        <title>Global analysis of protein expression in yeast.</title>
        <authorList>
            <person name="Ghaemmaghami S."/>
            <person name="Huh W.-K."/>
            <person name="Bower K."/>
            <person name="Howson R.W."/>
            <person name="Belle A."/>
            <person name="Dephoure N."/>
            <person name="O'Shea E.K."/>
            <person name="Weissman J.S."/>
        </authorList>
    </citation>
    <scope>LEVEL OF PROTEIN EXPRESSION [LARGE SCALE ANALYSIS]</scope>
</reference>
<keyword id="KW-0143">Chaperone</keyword>
<keyword id="KW-0256">Endoplasmic reticulum</keyword>
<keyword id="KW-0479">Metal-binding</keyword>
<keyword id="KW-0653">Protein transport</keyword>
<keyword id="KW-1185">Reference proteome</keyword>
<keyword id="KW-0677">Repeat</keyword>
<keyword id="KW-0732">Signal</keyword>
<keyword id="KW-0813">Transport</keyword>
<keyword id="KW-0862">Zinc</keyword>
<keyword id="KW-0863">Zinc-finger</keyword>
<name>SCJ1_YEAST</name>
<proteinExistence type="evidence at protein level"/>